<keyword id="KW-0133">Cell shape</keyword>
<keyword id="KW-0961">Cell wall biogenesis/degradation</keyword>
<keyword id="KW-0413">Isomerase</keyword>
<keyword id="KW-0573">Peptidoglycan synthesis</keyword>
<keyword id="KW-1185">Reference proteome</keyword>
<evidence type="ECO:0000255" key="1">
    <source>
        <dbReference type="HAMAP-Rule" id="MF_00258"/>
    </source>
</evidence>
<sequence>MAVESAAVGVFDSGVGGLSVLREIRARLPSESLLYVADNAHVPYGEKSAEYIRERCERIGDFLLEQGAKALVLACNTATAAAAAELRERYPQVPLVAMEPAVKPAAAATRNGRVGVLATTGTLKSARFAALLDRFASDVQVFTQPCPGLVERIEAGDLYGPQTRALLERLLAPILEQGCDTLILGCTHYPFVKPLLAELIPAEMAVIDTGAAVARQLERVLSARALLASGQAATPRFWTSALPEEMERILPILWGSPESVGKLVV</sequence>
<organism>
    <name type="scientific">Pseudomonas aeruginosa (strain ATCC 15692 / DSM 22644 / CIP 104116 / JCM 14847 / LMG 12228 / 1C / PRS 101 / PAO1)</name>
    <dbReference type="NCBI Taxonomy" id="208964"/>
    <lineage>
        <taxon>Bacteria</taxon>
        <taxon>Pseudomonadati</taxon>
        <taxon>Pseudomonadota</taxon>
        <taxon>Gammaproteobacteria</taxon>
        <taxon>Pseudomonadales</taxon>
        <taxon>Pseudomonadaceae</taxon>
        <taxon>Pseudomonas</taxon>
    </lineage>
</organism>
<gene>
    <name evidence="1" type="primary">murI</name>
    <name type="ordered locus">PA4662</name>
</gene>
<accession>Q9HVD0</accession>
<proteinExistence type="inferred from homology"/>
<comment type="function">
    <text evidence="1">Provides the (R)-glutamate required for cell wall biosynthesis.</text>
</comment>
<comment type="catalytic activity">
    <reaction evidence="1">
        <text>L-glutamate = D-glutamate</text>
        <dbReference type="Rhea" id="RHEA:12813"/>
        <dbReference type="ChEBI" id="CHEBI:29985"/>
        <dbReference type="ChEBI" id="CHEBI:29986"/>
        <dbReference type="EC" id="5.1.1.3"/>
    </reaction>
</comment>
<comment type="pathway">
    <text evidence="1">Cell wall biogenesis; peptidoglycan biosynthesis.</text>
</comment>
<comment type="similarity">
    <text evidence="1">Belongs to the aspartate/glutamate racemases family.</text>
</comment>
<name>MURI_PSEAE</name>
<feature type="chain" id="PRO_0000095497" description="Glutamate racemase">
    <location>
        <begin position="1"/>
        <end position="265"/>
    </location>
</feature>
<feature type="active site" description="Proton donor/acceptor" evidence="1">
    <location>
        <position position="75"/>
    </location>
</feature>
<feature type="active site" description="Proton donor/acceptor" evidence="1">
    <location>
        <position position="186"/>
    </location>
</feature>
<feature type="binding site" evidence="1">
    <location>
        <begin position="12"/>
        <end position="13"/>
    </location>
    <ligand>
        <name>substrate</name>
    </ligand>
</feature>
<feature type="binding site" evidence="1">
    <location>
        <begin position="44"/>
        <end position="45"/>
    </location>
    <ligand>
        <name>substrate</name>
    </ligand>
</feature>
<feature type="binding site" evidence="1">
    <location>
        <begin position="76"/>
        <end position="77"/>
    </location>
    <ligand>
        <name>substrate</name>
    </ligand>
</feature>
<feature type="binding site" evidence="1">
    <location>
        <begin position="187"/>
        <end position="188"/>
    </location>
    <ligand>
        <name>substrate</name>
    </ligand>
</feature>
<dbReference type="EC" id="5.1.1.3" evidence="1"/>
<dbReference type="EMBL" id="AE004091">
    <property type="protein sequence ID" value="AAG08049.1"/>
    <property type="molecule type" value="Genomic_DNA"/>
</dbReference>
<dbReference type="PIR" id="G83062">
    <property type="entry name" value="G83062"/>
</dbReference>
<dbReference type="RefSeq" id="NP_253351.1">
    <property type="nucleotide sequence ID" value="NC_002516.2"/>
</dbReference>
<dbReference type="RefSeq" id="WP_003099300.1">
    <property type="nucleotide sequence ID" value="NZ_QZGE01000029.1"/>
</dbReference>
<dbReference type="SMR" id="Q9HVD0"/>
<dbReference type="FunCoup" id="Q9HVD0">
    <property type="interactions" value="284"/>
</dbReference>
<dbReference type="STRING" id="208964.PA4662"/>
<dbReference type="PaxDb" id="208964-PA4662"/>
<dbReference type="DNASU" id="881345"/>
<dbReference type="GeneID" id="881345"/>
<dbReference type="KEGG" id="pae:PA4662"/>
<dbReference type="PATRIC" id="fig|208964.12.peg.4884"/>
<dbReference type="PseudoCAP" id="PA4662"/>
<dbReference type="HOGENOM" id="CLU_052344_1_0_6"/>
<dbReference type="InParanoid" id="Q9HVD0"/>
<dbReference type="OrthoDB" id="9801055at2"/>
<dbReference type="PhylomeDB" id="Q9HVD0"/>
<dbReference type="BioCyc" id="PAER208964:G1FZ6-4758-MONOMER"/>
<dbReference type="UniPathway" id="UPA00219"/>
<dbReference type="Proteomes" id="UP000002438">
    <property type="component" value="Chromosome"/>
</dbReference>
<dbReference type="GO" id="GO:0008881">
    <property type="term" value="F:glutamate racemase activity"/>
    <property type="evidence" value="ECO:0000318"/>
    <property type="project" value="GO_Central"/>
</dbReference>
<dbReference type="GO" id="GO:0071555">
    <property type="term" value="P:cell wall organization"/>
    <property type="evidence" value="ECO:0007669"/>
    <property type="project" value="UniProtKB-KW"/>
</dbReference>
<dbReference type="GO" id="GO:0009252">
    <property type="term" value="P:peptidoglycan biosynthetic process"/>
    <property type="evidence" value="ECO:0000318"/>
    <property type="project" value="GO_Central"/>
</dbReference>
<dbReference type="GO" id="GO:0008360">
    <property type="term" value="P:regulation of cell shape"/>
    <property type="evidence" value="ECO:0007669"/>
    <property type="project" value="UniProtKB-KW"/>
</dbReference>
<dbReference type="FunFam" id="3.40.50.1860:FF:000002">
    <property type="entry name" value="Glutamate racemase"/>
    <property type="match status" value="1"/>
</dbReference>
<dbReference type="Gene3D" id="3.40.50.1860">
    <property type="match status" value="2"/>
</dbReference>
<dbReference type="HAMAP" id="MF_00258">
    <property type="entry name" value="Glu_racemase"/>
    <property type="match status" value="1"/>
</dbReference>
<dbReference type="InterPro" id="IPR015942">
    <property type="entry name" value="Asp/Glu/hydantoin_racemase"/>
</dbReference>
<dbReference type="InterPro" id="IPR001920">
    <property type="entry name" value="Asp/Glu_race"/>
</dbReference>
<dbReference type="InterPro" id="IPR018187">
    <property type="entry name" value="Asp/Glu_racemase_AS_1"/>
</dbReference>
<dbReference type="InterPro" id="IPR033134">
    <property type="entry name" value="Asp/Glu_racemase_AS_2"/>
</dbReference>
<dbReference type="InterPro" id="IPR004391">
    <property type="entry name" value="Glu_race"/>
</dbReference>
<dbReference type="NCBIfam" id="TIGR00067">
    <property type="entry name" value="glut_race"/>
    <property type="match status" value="1"/>
</dbReference>
<dbReference type="PANTHER" id="PTHR21198">
    <property type="entry name" value="GLUTAMATE RACEMASE"/>
    <property type="match status" value="1"/>
</dbReference>
<dbReference type="PANTHER" id="PTHR21198:SF2">
    <property type="entry name" value="GLUTAMATE RACEMASE"/>
    <property type="match status" value="1"/>
</dbReference>
<dbReference type="Pfam" id="PF01177">
    <property type="entry name" value="Asp_Glu_race"/>
    <property type="match status" value="1"/>
</dbReference>
<dbReference type="SUPFAM" id="SSF53681">
    <property type="entry name" value="Aspartate/glutamate racemase"/>
    <property type="match status" value="2"/>
</dbReference>
<dbReference type="PROSITE" id="PS00923">
    <property type="entry name" value="ASP_GLU_RACEMASE_1"/>
    <property type="match status" value="1"/>
</dbReference>
<dbReference type="PROSITE" id="PS00924">
    <property type="entry name" value="ASP_GLU_RACEMASE_2"/>
    <property type="match status" value="1"/>
</dbReference>
<protein>
    <recommendedName>
        <fullName evidence="1">Glutamate racemase</fullName>
        <ecNumber evidence="1">5.1.1.3</ecNumber>
    </recommendedName>
</protein>
<reference key="1">
    <citation type="journal article" date="2000" name="Nature">
        <title>Complete genome sequence of Pseudomonas aeruginosa PAO1, an opportunistic pathogen.</title>
        <authorList>
            <person name="Stover C.K."/>
            <person name="Pham X.-Q.T."/>
            <person name="Erwin A.L."/>
            <person name="Mizoguchi S.D."/>
            <person name="Warrener P."/>
            <person name="Hickey M.J."/>
            <person name="Brinkman F.S.L."/>
            <person name="Hufnagle W.O."/>
            <person name="Kowalik D.J."/>
            <person name="Lagrou M."/>
            <person name="Garber R.L."/>
            <person name="Goltry L."/>
            <person name="Tolentino E."/>
            <person name="Westbrock-Wadman S."/>
            <person name="Yuan Y."/>
            <person name="Brody L.L."/>
            <person name="Coulter S.N."/>
            <person name="Folger K.R."/>
            <person name="Kas A."/>
            <person name="Larbig K."/>
            <person name="Lim R.M."/>
            <person name="Smith K.A."/>
            <person name="Spencer D.H."/>
            <person name="Wong G.K.-S."/>
            <person name="Wu Z."/>
            <person name="Paulsen I.T."/>
            <person name="Reizer J."/>
            <person name="Saier M.H. Jr."/>
            <person name="Hancock R.E.W."/>
            <person name="Lory S."/>
            <person name="Olson M.V."/>
        </authorList>
    </citation>
    <scope>NUCLEOTIDE SEQUENCE [LARGE SCALE GENOMIC DNA]</scope>
    <source>
        <strain>ATCC 15692 / DSM 22644 / CIP 104116 / JCM 14847 / LMG 12228 / 1C / PRS 101 / PAO1</strain>
    </source>
</reference>